<comment type="function">
    <text evidence="5 6">Protein that helps load RecA onto ssDNA during transformation (PubMed:17803906, PubMed:25138221). Binds cooperatively to circular ssDNA, is able to bridge different segments of DNA (PubMed:17803906). Favors the loading of RecA onto SsbA- or SsbB-coated ssDNA and formation of RecA-DNA filaments (PubMed:25138221). RecA-ATP cannot catalyze homologous DNA strand exchange; SsbA and DprA activate strand exchange by RecA-ATP (PubMed:25138221).</text>
</comment>
<comment type="subunit">
    <text evidence="1 5">Interacts with RecA (PubMed:17803906). Interacts with ComFA and ComFC (By similarity).</text>
</comment>
<comment type="interaction">
    <interactant intactId="EBI-1535559">
        <id>P39813</id>
    </interactant>
    <interactant intactId="EBI-1535844">
        <id>P16971</id>
        <label>recA</label>
    </interactant>
    <organismsDiffer>false</organismsDiffer>
    <experiments>3</experiments>
</comment>
<comment type="subcellular location">
    <subcellularLocation>
        <location>Cytoplasm</location>
    </subcellularLocation>
    <text evidence="4">Localizes mostly to the cell poles during the development of competence (PubMed:17630974). During competence a number of proteins (at least CoiA, ComFA, ComGA, DprA, RecA and SsbB) are thought to colocalize at the cell pole, in a disruption of ssbB DprA no longer accumulates (PubMed:17630974).</text>
</comment>
<comment type="developmental stage">
    <text evidence="4">Preferentially expressed in cells competent for DNA transformation; that is 5-15% of the population (PubMed:17630974).</text>
</comment>
<comment type="induction">
    <text evidence="2 3">Expression activated by ComK (PubMed:11918817, PubMed:11948146).</text>
</comment>
<comment type="disruption phenotype">
    <text evidence="2 3">Transformation efficiency drops 50- to 100-fold (PubMed:11918817, PubMed:11948146).</text>
</comment>
<comment type="similarity">
    <text evidence="8">Belongs to the DprA/Smf family.</text>
</comment>
<name>DPRA_BACSU</name>
<sequence length="297" mass="32935">MDQAAVCLTICRINQLLSPSLLLKWWKADPSMSLTSPVLQTVTRDQIKAAALKNEIEQFYPKLPRVLAAYREQGINTIPISSKQYPFWLKSIYDPPAVLFAKGDMTLLSKGRKIGIVGTRNPTAYGKQVVNHLTKEICRKGWVIVSGLASGIDGMSHAASIKAKGRTIGVIAGGFQHIYPRENLQLADHMAKHHILLSEHPPETKPQKWHFPMRNRIISGLSEGVIVVQGKEKSGSLITAYQALEQGREVFAVPGSLFDPYAGGPIKLIQQGAKAIWSAEDIFEELPERNVQYTEPF</sequence>
<gene>
    <name evidence="7" type="primary">dprA</name>
    <name type="synonym">smf</name>
    <name type="ordered locus">BSU16110</name>
</gene>
<keyword id="KW-0178">Competence</keyword>
<keyword id="KW-0963">Cytoplasm</keyword>
<keyword id="KW-0238">DNA-binding</keyword>
<keyword id="KW-1185">Reference proteome</keyword>
<accession>P39813</accession>
<accession>O34494</accession>
<dbReference type="EMBL" id="AJ000975">
    <property type="protein sequence ID" value="CAA04421.1"/>
    <property type="molecule type" value="Genomic_DNA"/>
</dbReference>
<dbReference type="EMBL" id="AL009126">
    <property type="protein sequence ID" value="CAB13484.1"/>
    <property type="molecule type" value="Genomic_DNA"/>
</dbReference>
<dbReference type="EMBL" id="L27797">
    <property type="protein sequence ID" value="AAA22762.1"/>
    <property type="molecule type" value="Genomic_DNA"/>
</dbReference>
<dbReference type="PIR" id="H69708">
    <property type="entry name" value="H69708"/>
</dbReference>
<dbReference type="RefSeq" id="NP_389493.1">
    <property type="nucleotide sequence ID" value="NC_000964.3"/>
</dbReference>
<dbReference type="RefSeq" id="WP_003245871.1">
    <property type="nucleotide sequence ID" value="NZ_OZ025638.1"/>
</dbReference>
<dbReference type="SMR" id="P39813"/>
<dbReference type="FunCoup" id="P39813">
    <property type="interactions" value="365"/>
</dbReference>
<dbReference type="IntAct" id="P39813">
    <property type="interactions" value="1"/>
</dbReference>
<dbReference type="STRING" id="224308.BSU16110"/>
<dbReference type="PaxDb" id="224308-BSU16110"/>
<dbReference type="DNASU" id="940135"/>
<dbReference type="EnsemblBacteria" id="CAB13484">
    <property type="protein sequence ID" value="CAB13484"/>
    <property type="gene ID" value="BSU_16110"/>
</dbReference>
<dbReference type="GeneID" id="940135"/>
<dbReference type="KEGG" id="bsu:BSU16110"/>
<dbReference type="PATRIC" id="fig|224308.179.peg.1751"/>
<dbReference type="eggNOG" id="COG0758">
    <property type="taxonomic scope" value="Bacteria"/>
</dbReference>
<dbReference type="InParanoid" id="P39813"/>
<dbReference type="OrthoDB" id="9785707at2"/>
<dbReference type="PhylomeDB" id="P39813"/>
<dbReference type="BioCyc" id="BSUB:BSU16110-MONOMER"/>
<dbReference type="Proteomes" id="UP000001570">
    <property type="component" value="Chromosome"/>
</dbReference>
<dbReference type="GO" id="GO:0005737">
    <property type="term" value="C:cytoplasm"/>
    <property type="evidence" value="ECO:0007669"/>
    <property type="project" value="UniProtKB-SubCell"/>
</dbReference>
<dbReference type="GO" id="GO:1990814">
    <property type="term" value="F:DNA/DNA annealing activity"/>
    <property type="evidence" value="ECO:0000314"/>
    <property type="project" value="CACAO"/>
</dbReference>
<dbReference type="GO" id="GO:0030420">
    <property type="term" value="P:establishment of competence for transformation"/>
    <property type="evidence" value="ECO:0007669"/>
    <property type="project" value="UniProtKB-KW"/>
</dbReference>
<dbReference type="Gene3D" id="3.40.50.450">
    <property type="match status" value="1"/>
</dbReference>
<dbReference type="InterPro" id="IPR003488">
    <property type="entry name" value="DprA"/>
</dbReference>
<dbReference type="NCBIfam" id="TIGR00732">
    <property type="entry name" value="dprA"/>
    <property type="match status" value="1"/>
</dbReference>
<dbReference type="PANTHER" id="PTHR43022">
    <property type="entry name" value="PROTEIN SMF"/>
    <property type="match status" value="1"/>
</dbReference>
<dbReference type="PANTHER" id="PTHR43022:SF1">
    <property type="entry name" value="PROTEIN SMF"/>
    <property type="match status" value="1"/>
</dbReference>
<dbReference type="Pfam" id="PF02481">
    <property type="entry name" value="DNA_processg_A"/>
    <property type="match status" value="1"/>
</dbReference>
<dbReference type="SUPFAM" id="SSF102405">
    <property type="entry name" value="MCP/YpsA-like"/>
    <property type="match status" value="1"/>
</dbReference>
<evidence type="ECO:0000250" key="1">
    <source>
        <dbReference type="UniProtKB" id="Q8DPI7"/>
    </source>
</evidence>
<evidence type="ECO:0000269" key="2">
    <source>
    </source>
</evidence>
<evidence type="ECO:0000269" key="3">
    <source>
    </source>
</evidence>
<evidence type="ECO:0000269" key="4">
    <source>
    </source>
</evidence>
<evidence type="ECO:0000269" key="5">
    <source>
    </source>
</evidence>
<evidence type="ECO:0000269" key="6">
    <source>
    </source>
</evidence>
<evidence type="ECO:0000303" key="7">
    <source>
    </source>
</evidence>
<evidence type="ECO:0000305" key="8"/>
<protein>
    <recommendedName>
        <fullName evidence="7">DNA processing protein DprA</fullName>
    </recommendedName>
    <alternativeName>
        <fullName>Protein Smf</fullName>
    </alternativeName>
</protein>
<reference key="1">
    <citation type="submission" date="1997-10" db="EMBL/GenBank/DDBJ databases">
        <title>Cloning and sequencing 7.5 Kbp of DNA from Bacillus subtilis upstream of the codV gene.</title>
        <authorList>
            <person name="Foulger D."/>
            <person name="Errington J."/>
        </authorList>
    </citation>
    <scope>NUCLEOTIDE SEQUENCE [GENOMIC DNA]</scope>
    <source>
        <strain>168</strain>
    </source>
</reference>
<reference key="2">
    <citation type="journal article" date="1997" name="Nature">
        <title>The complete genome sequence of the Gram-positive bacterium Bacillus subtilis.</title>
        <authorList>
            <person name="Kunst F."/>
            <person name="Ogasawara N."/>
            <person name="Moszer I."/>
            <person name="Albertini A.M."/>
            <person name="Alloni G."/>
            <person name="Azevedo V."/>
            <person name="Bertero M.G."/>
            <person name="Bessieres P."/>
            <person name="Bolotin A."/>
            <person name="Borchert S."/>
            <person name="Borriss R."/>
            <person name="Boursier L."/>
            <person name="Brans A."/>
            <person name="Braun M."/>
            <person name="Brignell S.C."/>
            <person name="Bron S."/>
            <person name="Brouillet S."/>
            <person name="Bruschi C.V."/>
            <person name="Caldwell B."/>
            <person name="Capuano V."/>
            <person name="Carter N.M."/>
            <person name="Choi S.-K."/>
            <person name="Codani J.-J."/>
            <person name="Connerton I.F."/>
            <person name="Cummings N.J."/>
            <person name="Daniel R.A."/>
            <person name="Denizot F."/>
            <person name="Devine K.M."/>
            <person name="Duesterhoeft A."/>
            <person name="Ehrlich S.D."/>
            <person name="Emmerson P.T."/>
            <person name="Entian K.-D."/>
            <person name="Errington J."/>
            <person name="Fabret C."/>
            <person name="Ferrari E."/>
            <person name="Foulger D."/>
            <person name="Fritz C."/>
            <person name="Fujita M."/>
            <person name="Fujita Y."/>
            <person name="Fuma S."/>
            <person name="Galizzi A."/>
            <person name="Galleron N."/>
            <person name="Ghim S.-Y."/>
            <person name="Glaser P."/>
            <person name="Goffeau A."/>
            <person name="Golightly E.J."/>
            <person name="Grandi G."/>
            <person name="Guiseppi G."/>
            <person name="Guy B.J."/>
            <person name="Haga K."/>
            <person name="Haiech J."/>
            <person name="Harwood C.R."/>
            <person name="Henaut A."/>
            <person name="Hilbert H."/>
            <person name="Holsappel S."/>
            <person name="Hosono S."/>
            <person name="Hullo M.-F."/>
            <person name="Itaya M."/>
            <person name="Jones L.-M."/>
            <person name="Joris B."/>
            <person name="Karamata D."/>
            <person name="Kasahara Y."/>
            <person name="Klaerr-Blanchard M."/>
            <person name="Klein C."/>
            <person name="Kobayashi Y."/>
            <person name="Koetter P."/>
            <person name="Koningstein G."/>
            <person name="Krogh S."/>
            <person name="Kumano M."/>
            <person name="Kurita K."/>
            <person name="Lapidus A."/>
            <person name="Lardinois S."/>
            <person name="Lauber J."/>
            <person name="Lazarevic V."/>
            <person name="Lee S.-M."/>
            <person name="Levine A."/>
            <person name="Liu H."/>
            <person name="Masuda S."/>
            <person name="Mauel C."/>
            <person name="Medigue C."/>
            <person name="Medina N."/>
            <person name="Mellado R.P."/>
            <person name="Mizuno M."/>
            <person name="Moestl D."/>
            <person name="Nakai S."/>
            <person name="Noback M."/>
            <person name="Noone D."/>
            <person name="O'Reilly M."/>
            <person name="Ogawa K."/>
            <person name="Ogiwara A."/>
            <person name="Oudega B."/>
            <person name="Park S.-H."/>
            <person name="Parro V."/>
            <person name="Pohl T.M."/>
            <person name="Portetelle D."/>
            <person name="Porwollik S."/>
            <person name="Prescott A.M."/>
            <person name="Presecan E."/>
            <person name="Pujic P."/>
            <person name="Purnelle B."/>
            <person name="Rapoport G."/>
            <person name="Rey M."/>
            <person name="Reynolds S."/>
            <person name="Rieger M."/>
            <person name="Rivolta C."/>
            <person name="Rocha E."/>
            <person name="Roche B."/>
            <person name="Rose M."/>
            <person name="Sadaie Y."/>
            <person name="Sato T."/>
            <person name="Scanlan E."/>
            <person name="Schleich S."/>
            <person name="Schroeter R."/>
            <person name="Scoffone F."/>
            <person name="Sekiguchi J."/>
            <person name="Sekowska A."/>
            <person name="Seror S.J."/>
            <person name="Serror P."/>
            <person name="Shin B.-S."/>
            <person name="Soldo B."/>
            <person name="Sorokin A."/>
            <person name="Tacconi E."/>
            <person name="Takagi T."/>
            <person name="Takahashi H."/>
            <person name="Takemaru K."/>
            <person name="Takeuchi M."/>
            <person name="Tamakoshi A."/>
            <person name="Tanaka T."/>
            <person name="Terpstra P."/>
            <person name="Tognoni A."/>
            <person name="Tosato V."/>
            <person name="Uchiyama S."/>
            <person name="Vandenbol M."/>
            <person name="Vannier F."/>
            <person name="Vassarotti A."/>
            <person name="Viari A."/>
            <person name="Wambutt R."/>
            <person name="Wedler E."/>
            <person name="Wedler H."/>
            <person name="Weitzenegger T."/>
            <person name="Winters P."/>
            <person name="Wipat A."/>
            <person name="Yamamoto H."/>
            <person name="Yamane K."/>
            <person name="Yasumoto K."/>
            <person name="Yata K."/>
            <person name="Yoshida K."/>
            <person name="Yoshikawa H.-F."/>
            <person name="Zumstein E."/>
            <person name="Yoshikawa H."/>
            <person name="Danchin A."/>
        </authorList>
    </citation>
    <scope>NUCLEOTIDE SEQUENCE [LARGE SCALE GENOMIC DNA]</scope>
    <source>
        <strain>168</strain>
    </source>
</reference>
<reference key="3">
    <citation type="submission" date="1994-08" db="EMBL/GenBank/DDBJ databases">
        <title>Cloning and sequencing of the TopI gene, the gene encoding B. subtilis DNA topoisomerase I.</title>
        <authorList>
            <person name="de Jong S."/>
        </authorList>
    </citation>
    <scope>NUCLEOTIDE SEQUENCE [GENOMIC DNA] OF 138-297</scope>
    <source>
        <strain>168 / 8G5</strain>
    </source>
</reference>
<reference key="4">
    <citation type="journal article" date="2002" name="Mol. Microbiol.">
        <title>Microarray analysis of the Bacillus subtilis K-state: genome-wide expression changes dependent on ComK.</title>
        <authorList>
            <person name="Berka R.M."/>
            <person name="Hahn J."/>
            <person name="Albano M."/>
            <person name="Draskovic I."/>
            <person name="Persuh M."/>
            <person name="Cui X."/>
            <person name="Sloma A."/>
            <person name="Widner W."/>
            <person name="Dubnau D."/>
        </authorList>
    </citation>
    <scope>INDUCTION</scope>
    <scope>DISRUPTION PHENOTYPE</scope>
    <source>
        <strain>168</strain>
    </source>
</reference>
<reference key="5">
    <citation type="journal article" date="2002" name="J. Bacteriol.">
        <title>Whole-genome analysis of genes regulated by the Bacillus subtilis competence transcription factor ComK.</title>
        <authorList>
            <person name="Ogura M."/>
            <person name="Yamaguchi H."/>
            <person name="Kobayashi K."/>
            <person name="Ogasawara N."/>
            <person name="Fujita Y."/>
            <person name="Tanaka T."/>
        </authorList>
    </citation>
    <scope>INDUCTION</scope>
    <scope>DISRUPTION PHENOTYPE</scope>
    <source>
        <strain>168 / CU741</strain>
    </source>
</reference>
<reference key="6">
    <citation type="journal article" date="2007" name="Mol. Microbiol.">
        <title>Multiple interactions among the competence proteins of Bacillus subtilis.</title>
        <authorList>
            <person name="Kramer N."/>
            <person name="Hahn J."/>
            <person name="Dubnau D."/>
        </authorList>
    </citation>
    <scope>GENE NAME</scope>
    <scope>SUBCELLULAR LOCATION</scope>
    <scope>DEVELOPMENTAL STAGE</scope>
    <source>
        <strain>168</strain>
    </source>
</reference>
<reference key="7">
    <citation type="journal article" date="2007" name="Cell">
        <title>A key presynaptic role in transformation for a widespread bacterial protein: DprA conveys incoming ssDNA to RecA.</title>
        <authorList>
            <person name="Mortier-Barriere I."/>
            <person name="Velten M."/>
            <person name="Dupaigne P."/>
            <person name="Mirouze N."/>
            <person name="Pietrement O."/>
            <person name="McGovern S."/>
            <person name="Fichant G."/>
            <person name="Martin B."/>
            <person name="Noirot P."/>
            <person name="Le Cam E."/>
            <person name="Polard P."/>
            <person name="Claverys J.P."/>
        </authorList>
    </citation>
    <scope>FUNCTION</scope>
    <scope>INTERACTION WITH RECA</scope>
    <scope>SUBUNIT</scope>
    <scope>DNA-BINDING</scope>
    <source>
        <strain>168</strain>
    </source>
</reference>
<reference key="8">
    <citation type="journal article" date="2014" name="J. Biol. Chem.">
        <title>Roles of Bacillus subtilis DprA and SsbA in RecA-mediated genetic recombination.</title>
        <authorList>
            <person name="Yadav T."/>
            <person name="Carrasco B."/>
            <person name="Serrano E."/>
            <person name="Alonso J.C."/>
        </authorList>
    </citation>
    <scope>FUNCTION</scope>
</reference>
<proteinExistence type="evidence at protein level"/>
<feature type="chain" id="PRO_0000209155" description="DNA processing protein DprA">
    <location>
        <begin position="1"/>
        <end position="297"/>
    </location>
</feature>
<feature type="sequence conflict" description="In Ref. 3; AAA22762." evidence="8" ref="3">
    <original>A</original>
    <variation>P</variation>
    <location>
        <position position="262"/>
    </location>
</feature>
<organism>
    <name type="scientific">Bacillus subtilis (strain 168)</name>
    <dbReference type="NCBI Taxonomy" id="224308"/>
    <lineage>
        <taxon>Bacteria</taxon>
        <taxon>Bacillati</taxon>
        <taxon>Bacillota</taxon>
        <taxon>Bacilli</taxon>
        <taxon>Bacillales</taxon>
        <taxon>Bacillaceae</taxon>
        <taxon>Bacillus</taxon>
    </lineage>
</organism>